<organism>
    <name type="scientific">Chlamydia trachomatis serovar A (strain ATCC VR-571B / DSM 19440 / HAR-13)</name>
    <dbReference type="NCBI Taxonomy" id="315277"/>
    <lineage>
        <taxon>Bacteria</taxon>
        <taxon>Pseudomonadati</taxon>
        <taxon>Chlamydiota</taxon>
        <taxon>Chlamydiia</taxon>
        <taxon>Chlamydiales</taxon>
        <taxon>Chlamydiaceae</taxon>
        <taxon>Chlamydia/Chlamydophila group</taxon>
        <taxon>Chlamydia</taxon>
    </lineage>
</organism>
<sequence>MTLLILLRHGQSVWNQKNLFTGWVDIPLSQQGIQEAIAAGESIKHLPIDCIFTSTLVRSLITALLAMTNHSSQKVPYIVHEERPDMSRIHSQKEMEQMIPLFQSSALNERMYGELQGKNKQEVAAQFGEEQVKLWRRSYRIAPPQGESLFDTGQRTLPYFQERIFPLLQQGKNIFISAHGNSLRSLIMDLEKLSEEQVLSLELPTGQPIVYEWTGQKFTKHAPSLG</sequence>
<reference key="1">
    <citation type="journal article" date="2005" name="Infect. Immun.">
        <title>Comparative genomic analysis of Chlamydia trachomatis oculotropic and genitotropic strains.</title>
        <authorList>
            <person name="Carlson J.H."/>
            <person name="Porcella S.F."/>
            <person name="McClarty G."/>
            <person name="Caldwell H.D."/>
        </authorList>
    </citation>
    <scope>NUCLEOTIDE SEQUENCE [LARGE SCALE GENOMIC DNA]</scope>
    <source>
        <strain>ATCC VR-571B / DSM 19440 / HAR-13</strain>
    </source>
</reference>
<comment type="function">
    <text evidence="1">Catalyzes the interconversion of 2-phosphoglycerate and 3-phosphoglycerate.</text>
</comment>
<comment type="catalytic activity">
    <reaction evidence="1">
        <text>(2R)-2-phosphoglycerate = (2R)-3-phosphoglycerate</text>
        <dbReference type="Rhea" id="RHEA:15901"/>
        <dbReference type="ChEBI" id="CHEBI:58272"/>
        <dbReference type="ChEBI" id="CHEBI:58289"/>
        <dbReference type="EC" id="5.4.2.11"/>
    </reaction>
</comment>
<comment type="pathway">
    <text evidence="1">Carbohydrate degradation; glycolysis; pyruvate from D-glyceraldehyde 3-phosphate: step 3/5.</text>
</comment>
<comment type="similarity">
    <text evidence="1">Belongs to the phosphoglycerate mutase family. BPG-dependent PGAM subfamily.</text>
</comment>
<accession>Q3KKX2</accession>
<dbReference type="EC" id="5.4.2.11" evidence="1"/>
<dbReference type="EMBL" id="CP000051">
    <property type="protein sequence ID" value="AAX51000.1"/>
    <property type="molecule type" value="Genomic_DNA"/>
</dbReference>
<dbReference type="RefSeq" id="WP_009872098.1">
    <property type="nucleotide sequence ID" value="NC_007429.1"/>
</dbReference>
<dbReference type="SMR" id="Q3KKX2"/>
<dbReference type="KEGG" id="cta:CTA_0784"/>
<dbReference type="HOGENOM" id="CLU_033323_1_4_0"/>
<dbReference type="UniPathway" id="UPA00109">
    <property type="reaction ID" value="UER00186"/>
</dbReference>
<dbReference type="Proteomes" id="UP000002532">
    <property type="component" value="Chromosome"/>
</dbReference>
<dbReference type="GO" id="GO:0004619">
    <property type="term" value="F:phosphoglycerate mutase activity"/>
    <property type="evidence" value="ECO:0007669"/>
    <property type="project" value="UniProtKB-EC"/>
</dbReference>
<dbReference type="GO" id="GO:0006094">
    <property type="term" value="P:gluconeogenesis"/>
    <property type="evidence" value="ECO:0007669"/>
    <property type="project" value="UniProtKB-UniRule"/>
</dbReference>
<dbReference type="GO" id="GO:0006096">
    <property type="term" value="P:glycolytic process"/>
    <property type="evidence" value="ECO:0007669"/>
    <property type="project" value="UniProtKB-UniRule"/>
</dbReference>
<dbReference type="CDD" id="cd07067">
    <property type="entry name" value="HP_PGM_like"/>
    <property type="match status" value="1"/>
</dbReference>
<dbReference type="Gene3D" id="3.40.50.1240">
    <property type="entry name" value="Phosphoglycerate mutase-like"/>
    <property type="match status" value="1"/>
</dbReference>
<dbReference type="HAMAP" id="MF_01039">
    <property type="entry name" value="PGAM_GpmA"/>
    <property type="match status" value="1"/>
</dbReference>
<dbReference type="InterPro" id="IPR013078">
    <property type="entry name" value="His_Pase_superF_clade-1"/>
</dbReference>
<dbReference type="InterPro" id="IPR029033">
    <property type="entry name" value="His_PPase_superfam"/>
</dbReference>
<dbReference type="InterPro" id="IPR001345">
    <property type="entry name" value="PG/BPGM_mutase_AS"/>
</dbReference>
<dbReference type="InterPro" id="IPR005952">
    <property type="entry name" value="Phosphogly_mut1"/>
</dbReference>
<dbReference type="NCBIfam" id="NF002217">
    <property type="entry name" value="PRK01112.1"/>
    <property type="match status" value="1"/>
</dbReference>
<dbReference type="PANTHER" id="PTHR11931">
    <property type="entry name" value="PHOSPHOGLYCERATE MUTASE"/>
    <property type="match status" value="1"/>
</dbReference>
<dbReference type="Pfam" id="PF00300">
    <property type="entry name" value="His_Phos_1"/>
    <property type="match status" value="2"/>
</dbReference>
<dbReference type="PIRSF" id="PIRSF000709">
    <property type="entry name" value="6PFK_2-Ptase"/>
    <property type="match status" value="1"/>
</dbReference>
<dbReference type="SMART" id="SM00855">
    <property type="entry name" value="PGAM"/>
    <property type="match status" value="1"/>
</dbReference>
<dbReference type="SUPFAM" id="SSF53254">
    <property type="entry name" value="Phosphoglycerate mutase-like"/>
    <property type="match status" value="1"/>
</dbReference>
<dbReference type="PROSITE" id="PS00175">
    <property type="entry name" value="PG_MUTASE"/>
    <property type="match status" value="1"/>
</dbReference>
<evidence type="ECO:0000255" key="1">
    <source>
        <dbReference type="HAMAP-Rule" id="MF_01039"/>
    </source>
</evidence>
<keyword id="KW-0312">Gluconeogenesis</keyword>
<keyword id="KW-0324">Glycolysis</keyword>
<keyword id="KW-0413">Isomerase</keyword>
<name>GPMA_CHLTA</name>
<gene>
    <name evidence="1" type="primary">gpmA</name>
    <name type="ordered locus">CTA_0784</name>
</gene>
<protein>
    <recommendedName>
        <fullName evidence="1">2,3-bisphosphoglycerate-dependent phosphoglycerate mutase</fullName>
        <shortName evidence="1">BPG-dependent PGAM</shortName>
        <shortName evidence="1">PGAM</shortName>
        <shortName evidence="1">Phosphoglyceromutase</shortName>
        <shortName evidence="1">dPGM</shortName>
        <ecNumber evidence="1">5.4.2.11</ecNumber>
    </recommendedName>
</protein>
<feature type="chain" id="PRO_0000229115" description="2,3-bisphosphoglycerate-dependent phosphoglycerate mutase">
    <location>
        <begin position="1"/>
        <end position="226"/>
    </location>
</feature>
<feature type="active site" description="Tele-phosphohistidine intermediate" evidence="1">
    <location>
        <position position="9"/>
    </location>
</feature>
<feature type="active site" description="Proton donor/acceptor" evidence="1">
    <location>
        <position position="109"/>
    </location>
</feature>
<feature type="binding site" evidence="1">
    <location>
        <begin position="8"/>
        <end position="15"/>
    </location>
    <ligand>
        <name>substrate</name>
    </ligand>
</feature>
<feature type="binding site" evidence="1">
    <location>
        <begin position="21"/>
        <end position="22"/>
    </location>
    <ligand>
        <name>substrate</name>
    </ligand>
</feature>
<feature type="binding site" evidence="1">
    <location>
        <position position="58"/>
    </location>
    <ligand>
        <name>substrate</name>
    </ligand>
</feature>
<feature type="binding site" evidence="1">
    <location>
        <begin position="109"/>
        <end position="112"/>
    </location>
    <ligand>
        <name>substrate</name>
    </ligand>
</feature>
<feature type="binding site" evidence="1">
    <location>
        <position position="120"/>
    </location>
    <ligand>
        <name>substrate</name>
    </ligand>
</feature>
<feature type="binding site" evidence="1">
    <location>
        <begin position="136"/>
        <end position="137"/>
    </location>
    <ligand>
        <name>substrate</name>
    </ligand>
</feature>
<feature type="binding site" evidence="1">
    <location>
        <begin position="180"/>
        <end position="181"/>
    </location>
    <ligand>
        <name>substrate</name>
    </ligand>
</feature>
<feature type="site" description="Transition state stabilizer" evidence="1">
    <location>
        <position position="179"/>
    </location>
</feature>
<proteinExistence type="inferred from homology"/>